<comment type="function">
    <text evidence="1">Regulatory subunit of a potassium efflux system that confers protection against electrophiles. Required for full activity of KefB.</text>
</comment>
<comment type="catalytic activity">
    <reaction evidence="1">
        <text>a quinone + NADH + H(+) = a quinol + NAD(+)</text>
        <dbReference type="Rhea" id="RHEA:46160"/>
        <dbReference type="ChEBI" id="CHEBI:15378"/>
        <dbReference type="ChEBI" id="CHEBI:24646"/>
        <dbReference type="ChEBI" id="CHEBI:57540"/>
        <dbReference type="ChEBI" id="CHEBI:57945"/>
        <dbReference type="ChEBI" id="CHEBI:132124"/>
        <dbReference type="EC" id="1.6.5.2"/>
    </reaction>
</comment>
<comment type="catalytic activity">
    <reaction evidence="1">
        <text>a quinone + NADPH + H(+) = a quinol + NADP(+)</text>
        <dbReference type="Rhea" id="RHEA:46164"/>
        <dbReference type="ChEBI" id="CHEBI:15378"/>
        <dbReference type="ChEBI" id="CHEBI:24646"/>
        <dbReference type="ChEBI" id="CHEBI:57783"/>
        <dbReference type="ChEBI" id="CHEBI:58349"/>
        <dbReference type="ChEBI" id="CHEBI:132124"/>
        <dbReference type="EC" id="1.6.5.2"/>
    </reaction>
</comment>
<comment type="subunit">
    <text evidence="1">Interacts with KefB.</text>
</comment>
<comment type="subcellular location">
    <subcellularLocation>
        <location evidence="1">Cell inner membrane</location>
        <topology evidence="1">Peripheral membrane protein</topology>
        <orientation evidence="1">Cytoplasmic side</orientation>
    </subcellularLocation>
</comment>
<comment type="similarity">
    <text evidence="1">Belongs to the NAD(P)H dehydrogenase (quinone) family. KefG subfamily.</text>
</comment>
<feature type="chain" id="PRO_1000145591" description="Glutathione-regulated potassium-efflux system ancillary protein KefG">
    <location>
        <begin position="1"/>
        <end position="182"/>
    </location>
</feature>
<gene>
    <name evidence="1" type="primary">kefG</name>
    <name type="ordered locus">YPK_0265</name>
</gene>
<keyword id="KW-0997">Cell inner membrane</keyword>
<keyword id="KW-1003">Cell membrane</keyword>
<keyword id="KW-0472">Membrane</keyword>
<keyword id="KW-0520">NAD</keyword>
<keyword id="KW-0560">Oxidoreductase</keyword>
<organism>
    <name type="scientific">Yersinia pseudotuberculosis serotype O:3 (strain YPIII)</name>
    <dbReference type="NCBI Taxonomy" id="502800"/>
    <lineage>
        <taxon>Bacteria</taxon>
        <taxon>Pseudomonadati</taxon>
        <taxon>Pseudomonadota</taxon>
        <taxon>Gammaproteobacteria</taxon>
        <taxon>Enterobacterales</taxon>
        <taxon>Yersiniaceae</taxon>
        <taxon>Yersinia</taxon>
    </lineage>
</organism>
<accession>B1JIU3</accession>
<proteinExistence type="inferred from homology"/>
<reference key="1">
    <citation type="submission" date="2008-02" db="EMBL/GenBank/DDBJ databases">
        <title>Complete sequence of Yersinia pseudotuberculosis YPIII.</title>
        <authorList>
            <consortium name="US DOE Joint Genome Institute"/>
            <person name="Copeland A."/>
            <person name="Lucas S."/>
            <person name="Lapidus A."/>
            <person name="Glavina del Rio T."/>
            <person name="Dalin E."/>
            <person name="Tice H."/>
            <person name="Bruce D."/>
            <person name="Goodwin L."/>
            <person name="Pitluck S."/>
            <person name="Munk A.C."/>
            <person name="Brettin T."/>
            <person name="Detter J.C."/>
            <person name="Han C."/>
            <person name="Tapia R."/>
            <person name="Schmutz J."/>
            <person name="Larimer F."/>
            <person name="Land M."/>
            <person name="Hauser L."/>
            <person name="Challacombe J.F."/>
            <person name="Green L."/>
            <person name="Lindler L.E."/>
            <person name="Nikolich M.P."/>
            <person name="Richardson P."/>
        </authorList>
    </citation>
    <scope>NUCLEOTIDE SEQUENCE [LARGE SCALE GENOMIC DNA]</scope>
    <source>
        <strain>YPIII</strain>
    </source>
</reference>
<name>KEFG_YERPY</name>
<evidence type="ECO:0000255" key="1">
    <source>
        <dbReference type="HAMAP-Rule" id="MF_01415"/>
    </source>
</evidence>
<dbReference type="EC" id="1.6.5.2" evidence="1"/>
<dbReference type="EMBL" id="CP000950">
    <property type="protein sequence ID" value="ACA66578.1"/>
    <property type="molecule type" value="Genomic_DNA"/>
</dbReference>
<dbReference type="RefSeq" id="WP_002215966.1">
    <property type="nucleotide sequence ID" value="NZ_CP009792.1"/>
</dbReference>
<dbReference type="SMR" id="B1JIU3"/>
<dbReference type="GeneID" id="57974413"/>
<dbReference type="KEGG" id="ypy:YPK_0265"/>
<dbReference type="PATRIC" id="fig|502800.11.peg.871"/>
<dbReference type="GO" id="GO:0005886">
    <property type="term" value="C:plasma membrane"/>
    <property type="evidence" value="ECO:0007669"/>
    <property type="project" value="UniProtKB-SubCell"/>
</dbReference>
<dbReference type="GO" id="GO:0009055">
    <property type="term" value="F:electron transfer activity"/>
    <property type="evidence" value="ECO:0007669"/>
    <property type="project" value="TreeGrafter"/>
</dbReference>
<dbReference type="GO" id="GO:0010181">
    <property type="term" value="F:FMN binding"/>
    <property type="evidence" value="ECO:0007669"/>
    <property type="project" value="TreeGrafter"/>
</dbReference>
<dbReference type="GO" id="GO:0050136">
    <property type="term" value="F:NADH:ubiquinone reductase (non-electrogenic) activity"/>
    <property type="evidence" value="ECO:0007669"/>
    <property type="project" value="RHEA"/>
</dbReference>
<dbReference type="GO" id="GO:0008753">
    <property type="term" value="F:NADPH dehydrogenase (quinone) activity"/>
    <property type="evidence" value="ECO:0007669"/>
    <property type="project" value="RHEA"/>
</dbReference>
<dbReference type="GO" id="GO:1901381">
    <property type="term" value="P:positive regulation of potassium ion transmembrane transport"/>
    <property type="evidence" value="ECO:0007669"/>
    <property type="project" value="UniProtKB-UniRule"/>
</dbReference>
<dbReference type="GO" id="GO:0006813">
    <property type="term" value="P:potassium ion transport"/>
    <property type="evidence" value="ECO:0007669"/>
    <property type="project" value="InterPro"/>
</dbReference>
<dbReference type="FunFam" id="3.40.50.360:FF:000013">
    <property type="entry name" value="Glutathione-regulated potassium-efflux system ancillary protein KefG"/>
    <property type="match status" value="1"/>
</dbReference>
<dbReference type="Gene3D" id="3.40.50.360">
    <property type="match status" value="1"/>
</dbReference>
<dbReference type="HAMAP" id="MF_01415">
    <property type="entry name" value="K_H_efflux_KefG"/>
    <property type="match status" value="1"/>
</dbReference>
<dbReference type="InterPro" id="IPR003680">
    <property type="entry name" value="Flavodoxin_fold"/>
</dbReference>
<dbReference type="InterPro" id="IPR029039">
    <property type="entry name" value="Flavoprotein-like_sf"/>
</dbReference>
<dbReference type="InterPro" id="IPR023947">
    <property type="entry name" value="K_H_efflux_KefG"/>
</dbReference>
<dbReference type="InterPro" id="IPR046980">
    <property type="entry name" value="KefG/KefF"/>
</dbReference>
<dbReference type="NCBIfam" id="NF003430">
    <property type="entry name" value="PRK04930.1"/>
    <property type="match status" value="1"/>
</dbReference>
<dbReference type="PANTHER" id="PTHR47307">
    <property type="entry name" value="GLUTATHIONE-REGULATED POTASSIUM-EFFLUX SYSTEM ANCILLARY PROTEIN KEFG"/>
    <property type="match status" value="1"/>
</dbReference>
<dbReference type="PANTHER" id="PTHR47307:SF1">
    <property type="entry name" value="GLUTATHIONE-REGULATED POTASSIUM-EFFLUX SYSTEM ANCILLARY PROTEIN KEFG"/>
    <property type="match status" value="1"/>
</dbReference>
<dbReference type="Pfam" id="PF02525">
    <property type="entry name" value="Flavodoxin_2"/>
    <property type="match status" value="1"/>
</dbReference>
<dbReference type="SUPFAM" id="SSF52218">
    <property type="entry name" value="Flavoproteins"/>
    <property type="match status" value="1"/>
</dbReference>
<protein>
    <recommendedName>
        <fullName evidence="1">Glutathione-regulated potassium-efflux system ancillary protein KefG</fullName>
    </recommendedName>
    <alternativeName>
        <fullName evidence="1">Putative quinone oxidoreductase KefG</fullName>
        <ecNumber evidence="1">1.6.5.2</ecNumber>
    </alternativeName>
</protein>
<sequence>MLQPPKVLLLYAHPESQDSVANRVLLQPVQQLEHVTVHDLYAHYPDFFIDIHHEQQLLRDHQVIVFQHPLYTYSCPALLKEWLDRVLARGFANGVGGHALTGKHWRSVITTGEQEGTYRIGGYNRYPMEDILRPFELTAAMCHMHWINPMIIYWARRQKPETLASHAQAYVQWLQSPLTRGL</sequence>